<name>AROC_COLP3</name>
<proteinExistence type="inferred from homology"/>
<comment type="function">
    <text evidence="1">Catalyzes the anti-1,4-elimination of the C-3 phosphate and the C-6 proR hydrogen from 5-enolpyruvylshikimate-3-phosphate (EPSP) to yield chorismate, which is the branch point compound that serves as the starting substrate for the three terminal pathways of aromatic amino acid biosynthesis. This reaction introduces a second double bond into the aromatic ring system.</text>
</comment>
<comment type="catalytic activity">
    <reaction evidence="1">
        <text>5-O-(1-carboxyvinyl)-3-phosphoshikimate = chorismate + phosphate</text>
        <dbReference type="Rhea" id="RHEA:21020"/>
        <dbReference type="ChEBI" id="CHEBI:29748"/>
        <dbReference type="ChEBI" id="CHEBI:43474"/>
        <dbReference type="ChEBI" id="CHEBI:57701"/>
        <dbReference type="EC" id="4.2.3.5"/>
    </reaction>
</comment>
<comment type="cofactor">
    <cofactor evidence="1">
        <name>FMNH2</name>
        <dbReference type="ChEBI" id="CHEBI:57618"/>
    </cofactor>
    <text evidence="1">Reduced FMN (FMNH(2)).</text>
</comment>
<comment type="pathway">
    <text evidence="1">Metabolic intermediate biosynthesis; chorismate biosynthesis; chorismate from D-erythrose 4-phosphate and phosphoenolpyruvate: step 7/7.</text>
</comment>
<comment type="subunit">
    <text evidence="1">Homotetramer.</text>
</comment>
<comment type="similarity">
    <text evidence="1">Belongs to the chorismate synthase family.</text>
</comment>
<feature type="chain" id="PRO_0000256286" description="Chorismate synthase">
    <location>
        <begin position="1"/>
        <end position="373"/>
    </location>
</feature>
<feature type="binding site" evidence="1">
    <location>
        <position position="48"/>
    </location>
    <ligand>
        <name>NADP(+)</name>
        <dbReference type="ChEBI" id="CHEBI:58349"/>
    </ligand>
</feature>
<feature type="binding site" evidence="1">
    <location>
        <position position="54"/>
    </location>
    <ligand>
        <name>NADP(+)</name>
        <dbReference type="ChEBI" id="CHEBI:58349"/>
    </ligand>
</feature>
<feature type="binding site" evidence="1">
    <location>
        <begin position="125"/>
        <end position="127"/>
    </location>
    <ligand>
        <name>FMN</name>
        <dbReference type="ChEBI" id="CHEBI:58210"/>
    </ligand>
</feature>
<feature type="binding site" evidence="1">
    <location>
        <begin position="248"/>
        <end position="249"/>
    </location>
    <ligand>
        <name>FMN</name>
        <dbReference type="ChEBI" id="CHEBI:58210"/>
    </ligand>
</feature>
<feature type="binding site" evidence="1">
    <location>
        <position position="288"/>
    </location>
    <ligand>
        <name>FMN</name>
        <dbReference type="ChEBI" id="CHEBI:58210"/>
    </ligand>
</feature>
<feature type="binding site" evidence="1">
    <location>
        <begin position="303"/>
        <end position="307"/>
    </location>
    <ligand>
        <name>FMN</name>
        <dbReference type="ChEBI" id="CHEBI:58210"/>
    </ligand>
</feature>
<feature type="binding site" evidence="1">
    <location>
        <position position="329"/>
    </location>
    <ligand>
        <name>FMN</name>
        <dbReference type="ChEBI" id="CHEBI:58210"/>
    </ligand>
</feature>
<accession>Q47ZC3</accession>
<sequence length="373" mass="39913">MSGNTFGKLFTVTSFGESHGLGLGAIIDGCPPGLELTEADLQIDLDRRRPGTSRYTTARREADEVKILSGVFEGKTTGTPIGLMIENTDQRSKDYGNIADSFRPGHADYTYWQKYGLRDYRGGGRSSARETAMRVAAGAIAKKYLAEKFGMTIQACVTQIGDIVASGPKGAPFDVNTVDWSSVEDNPFFFPDETKIEQLGEYLRDIIKEKDSIGAKVTVVATNVPVGLGEPIFDRLDADIAHGLMSINAVKGVEVGDGFAVVNQKGSEHRDELTPEGFSTNHSGGVLGGISSGQQIIAHLALKPTSSIGVSGKTVNLTGEATDIITKGRHDPCVGIRAVPIAEAMLALTLMDHFLRHRGQNADVQCNTPDIEA</sequence>
<reference key="1">
    <citation type="journal article" date="2005" name="Proc. Natl. Acad. Sci. U.S.A.">
        <title>The psychrophilic lifestyle as revealed by the genome sequence of Colwellia psychrerythraea 34H through genomic and proteomic analyses.</title>
        <authorList>
            <person name="Methe B.A."/>
            <person name="Nelson K.E."/>
            <person name="Deming J.W."/>
            <person name="Momen B."/>
            <person name="Melamud E."/>
            <person name="Zhang X."/>
            <person name="Moult J."/>
            <person name="Madupu R."/>
            <person name="Nelson W.C."/>
            <person name="Dodson R.J."/>
            <person name="Brinkac L.M."/>
            <person name="Daugherty S.C."/>
            <person name="Durkin A.S."/>
            <person name="DeBoy R.T."/>
            <person name="Kolonay J.F."/>
            <person name="Sullivan S.A."/>
            <person name="Zhou L."/>
            <person name="Davidsen T.M."/>
            <person name="Wu M."/>
            <person name="Huston A.L."/>
            <person name="Lewis M."/>
            <person name="Weaver B."/>
            <person name="Weidman J.F."/>
            <person name="Khouri H."/>
            <person name="Utterback T.R."/>
            <person name="Feldblyum T.V."/>
            <person name="Fraser C.M."/>
        </authorList>
    </citation>
    <scope>NUCLEOTIDE SEQUENCE [LARGE SCALE GENOMIC DNA]</scope>
    <source>
        <strain>34H / ATCC BAA-681</strain>
    </source>
</reference>
<dbReference type="EC" id="4.2.3.5" evidence="1"/>
<dbReference type="EMBL" id="CP000083">
    <property type="protein sequence ID" value="AAZ25925.1"/>
    <property type="molecule type" value="Genomic_DNA"/>
</dbReference>
<dbReference type="RefSeq" id="WP_011043934.1">
    <property type="nucleotide sequence ID" value="NC_003910.7"/>
</dbReference>
<dbReference type="SMR" id="Q47ZC3"/>
<dbReference type="STRING" id="167879.CPS_3150"/>
<dbReference type="KEGG" id="cps:CPS_3150"/>
<dbReference type="eggNOG" id="COG0082">
    <property type="taxonomic scope" value="Bacteria"/>
</dbReference>
<dbReference type="HOGENOM" id="CLU_034547_0_2_6"/>
<dbReference type="UniPathway" id="UPA00053">
    <property type="reaction ID" value="UER00090"/>
</dbReference>
<dbReference type="Proteomes" id="UP000000547">
    <property type="component" value="Chromosome"/>
</dbReference>
<dbReference type="GO" id="GO:0005829">
    <property type="term" value="C:cytosol"/>
    <property type="evidence" value="ECO:0007669"/>
    <property type="project" value="TreeGrafter"/>
</dbReference>
<dbReference type="GO" id="GO:0004107">
    <property type="term" value="F:chorismate synthase activity"/>
    <property type="evidence" value="ECO:0007669"/>
    <property type="project" value="UniProtKB-UniRule"/>
</dbReference>
<dbReference type="GO" id="GO:0010181">
    <property type="term" value="F:FMN binding"/>
    <property type="evidence" value="ECO:0007669"/>
    <property type="project" value="TreeGrafter"/>
</dbReference>
<dbReference type="GO" id="GO:0008652">
    <property type="term" value="P:amino acid biosynthetic process"/>
    <property type="evidence" value="ECO:0007669"/>
    <property type="project" value="UniProtKB-KW"/>
</dbReference>
<dbReference type="GO" id="GO:0009073">
    <property type="term" value="P:aromatic amino acid family biosynthetic process"/>
    <property type="evidence" value="ECO:0007669"/>
    <property type="project" value="UniProtKB-KW"/>
</dbReference>
<dbReference type="GO" id="GO:0009423">
    <property type="term" value="P:chorismate biosynthetic process"/>
    <property type="evidence" value="ECO:0007669"/>
    <property type="project" value="UniProtKB-UniRule"/>
</dbReference>
<dbReference type="CDD" id="cd07304">
    <property type="entry name" value="Chorismate_synthase"/>
    <property type="match status" value="1"/>
</dbReference>
<dbReference type="FunFam" id="3.60.150.10:FF:000001">
    <property type="entry name" value="Chorismate synthase"/>
    <property type="match status" value="1"/>
</dbReference>
<dbReference type="Gene3D" id="3.60.150.10">
    <property type="entry name" value="Chorismate synthase AroC"/>
    <property type="match status" value="1"/>
</dbReference>
<dbReference type="HAMAP" id="MF_00300">
    <property type="entry name" value="Chorismate_synth"/>
    <property type="match status" value="1"/>
</dbReference>
<dbReference type="InterPro" id="IPR000453">
    <property type="entry name" value="Chorismate_synth"/>
</dbReference>
<dbReference type="InterPro" id="IPR035904">
    <property type="entry name" value="Chorismate_synth_AroC_sf"/>
</dbReference>
<dbReference type="InterPro" id="IPR020541">
    <property type="entry name" value="Chorismate_synthase_CS"/>
</dbReference>
<dbReference type="NCBIfam" id="TIGR00033">
    <property type="entry name" value="aroC"/>
    <property type="match status" value="1"/>
</dbReference>
<dbReference type="NCBIfam" id="NF003793">
    <property type="entry name" value="PRK05382.1"/>
    <property type="match status" value="1"/>
</dbReference>
<dbReference type="PANTHER" id="PTHR21085">
    <property type="entry name" value="CHORISMATE SYNTHASE"/>
    <property type="match status" value="1"/>
</dbReference>
<dbReference type="PANTHER" id="PTHR21085:SF0">
    <property type="entry name" value="CHORISMATE SYNTHASE"/>
    <property type="match status" value="1"/>
</dbReference>
<dbReference type="Pfam" id="PF01264">
    <property type="entry name" value="Chorismate_synt"/>
    <property type="match status" value="1"/>
</dbReference>
<dbReference type="PIRSF" id="PIRSF001456">
    <property type="entry name" value="Chorismate_synth"/>
    <property type="match status" value="1"/>
</dbReference>
<dbReference type="SUPFAM" id="SSF103263">
    <property type="entry name" value="Chorismate synthase, AroC"/>
    <property type="match status" value="1"/>
</dbReference>
<dbReference type="PROSITE" id="PS00787">
    <property type="entry name" value="CHORISMATE_SYNTHASE_1"/>
    <property type="match status" value="1"/>
</dbReference>
<dbReference type="PROSITE" id="PS00788">
    <property type="entry name" value="CHORISMATE_SYNTHASE_2"/>
    <property type="match status" value="1"/>
</dbReference>
<dbReference type="PROSITE" id="PS00789">
    <property type="entry name" value="CHORISMATE_SYNTHASE_3"/>
    <property type="match status" value="1"/>
</dbReference>
<protein>
    <recommendedName>
        <fullName evidence="1">Chorismate synthase</fullName>
        <shortName evidence="1">CS</shortName>
        <ecNumber evidence="1">4.2.3.5</ecNumber>
    </recommendedName>
    <alternativeName>
        <fullName evidence="1">5-enolpyruvylshikimate-3-phosphate phospholyase</fullName>
    </alternativeName>
</protein>
<evidence type="ECO:0000255" key="1">
    <source>
        <dbReference type="HAMAP-Rule" id="MF_00300"/>
    </source>
</evidence>
<gene>
    <name evidence="1" type="primary">aroC</name>
    <name type="ordered locus">CPS_3150</name>
</gene>
<organism>
    <name type="scientific">Colwellia psychrerythraea (strain 34H / ATCC BAA-681)</name>
    <name type="common">Vibrio psychroerythus</name>
    <dbReference type="NCBI Taxonomy" id="167879"/>
    <lineage>
        <taxon>Bacteria</taxon>
        <taxon>Pseudomonadati</taxon>
        <taxon>Pseudomonadota</taxon>
        <taxon>Gammaproteobacteria</taxon>
        <taxon>Alteromonadales</taxon>
        <taxon>Colwelliaceae</taxon>
        <taxon>Colwellia</taxon>
    </lineage>
</organism>
<keyword id="KW-0028">Amino-acid biosynthesis</keyword>
<keyword id="KW-0057">Aromatic amino acid biosynthesis</keyword>
<keyword id="KW-0274">FAD</keyword>
<keyword id="KW-0285">Flavoprotein</keyword>
<keyword id="KW-0288">FMN</keyword>
<keyword id="KW-0456">Lyase</keyword>
<keyword id="KW-0521">NADP</keyword>